<feature type="chain" id="PRO_0000167108" description="Cysteine synthase B">
    <location>
        <begin position="1"/>
        <end position="303"/>
    </location>
</feature>
<feature type="binding site" evidence="1">
    <location>
        <position position="71"/>
    </location>
    <ligand>
        <name>pyridoxal 5'-phosphate</name>
        <dbReference type="ChEBI" id="CHEBI:597326"/>
    </ligand>
</feature>
<feature type="binding site">
    <location>
        <begin position="174"/>
        <end position="178"/>
    </location>
    <ligand>
        <name>pyridoxal 5'-phosphate</name>
        <dbReference type="ChEBI" id="CHEBI:597326"/>
    </ligand>
</feature>
<feature type="binding site" evidence="1">
    <location>
        <position position="255"/>
    </location>
    <ligand>
        <name>pyridoxal 5'-phosphate</name>
        <dbReference type="ChEBI" id="CHEBI:597326"/>
    </ligand>
</feature>
<feature type="modified residue" description="N6-(pyridoxal phosphate)lysine">
    <location>
        <position position="41"/>
    </location>
</feature>
<feature type="helix" evidence="4">
    <location>
        <begin position="4"/>
        <end position="7"/>
    </location>
</feature>
<feature type="strand" evidence="4">
    <location>
        <begin position="13"/>
        <end position="15"/>
    </location>
</feature>
<feature type="strand" evidence="4">
    <location>
        <begin position="17"/>
        <end position="20"/>
    </location>
</feature>
<feature type="strand" evidence="4">
    <location>
        <begin position="22"/>
        <end position="24"/>
    </location>
</feature>
<feature type="strand" evidence="4">
    <location>
        <begin position="26"/>
        <end position="31"/>
    </location>
</feature>
<feature type="helix" evidence="4">
    <location>
        <begin position="32"/>
        <end position="34"/>
    </location>
</feature>
<feature type="helix" evidence="4">
    <location>
        <begin position="41"/>
        <end position="54"/>
    </location>
</feature>
<feature type="strand" evidence="4">
    <location>
        <begin position="63"/>
        <end position="67"/>
    </location>
</feature>
<feature type="helix" evidence="4">
    <location>
        <begin position="71"/>
        <end position="83"/>
    </location>
</feature>
<feature type="strand" evidence="4">
    <location>
        <begin position="86"/>
        <end position="92"/>
    </location>
</feature>
<feature type="helix" evidence="4">
    <location>
        <begin position="97"/>
        <end position="105"/>
    </location>
</feature>
<feature type="strand" evidence="4">
    <location>
        <begin position="109"/>
        <end position="113"/>
    </location>
</feature>
<feature type="turn" evidence="4">
    <location>
        <begin position="115"/>
        <end position="117"/>
    </location>
</feature>
<feature type="helix" evidence="4">
    <location>
        <begin position="118"/>
        <end position="131"/>
    </location>
</feature>
<feature type="strand" evidence="3">
    <location>
        <begin position="134"/>
        <end position="137"/>
    </location>
</feature>
<feature type="turn" evidence="4">
    <location>
        <begin position="140"/>
        <end position="142"/>
    </location>
</feature>
<feature type="helix" evidence="4">
    <location>
        <begin position="145"/>
        <end position="152"/>
    </location>
</feature>
<feature type="helix" evidence="4">
    <location>
        <begin position="154"/>
        <end position="161"/>
    </location>
</feature>
<feature type="turn" evidence="4">
    <location>
        <begin position="162"/>
        <end position="164"/>
    </location>
</feature>
<feature type="strand" evidence="4">
    <location>
        <begin position="168"/>
        <end position="172"/>
    </location>
</feature>
<feature type="strand" evidence="4">
    <location>
        <begin position="174"/>
        <end position="176"/>
    </location>
</feature>
<feature type="helix" evidence="4">
    <location>
        <begin position="177"/>
        <end position="187"/>
    </location>
</feature>
<feature type="strand" evidence="4">
    <location>
        <begin position="189"/>
        <end position="191"/>
    </location>
</feature>
<feature type="strand" evidence="4">
    <location>
        <begin position="194"/>
        <end position="200"/>
    </location>
</feature>
<feature type="helix" evidence="4">
    <location>
        <begin position="214"/>
        <end position="216"/>
    </location>
</feature>
<feature type="helix" evidence="4">
    <location>
        <begin position="223"/>
        <end position="225"/>
    </location>
</feature>
<feature type="strand" evidence="4">
    <location>
        <begin position="227"/>
        <end position="232"/>
    </location>
</feature>
<feature type="helix" evidence="4">
    <location>
        <begin position="234"/>
        <end position="248"/>
    </location>
</feature>
<feature type="helix" evidence="4">
    <location>
        <begin position="254"/>
        <end position="269"/>
    </location>
</feature>
<feature type="strand" evidence="4">
    <location>
        <begin position="274"/>
        <end position="279"/>
    </location>
</feature>
<feature type="strand" evidence="4">
    <location>
        <begin position="281"/>
        <end position="283"/>
    </location>
</feature>
<feature type="helix" evidence="4">
    <location>
        <begin position="284"/>
        <end position="289"/>
    </location>
</feature>
<feature type="turn" evidence="4">
    <location>
        <begin position="290"/>
        <end position="292"/>
    </location>
</feature>
<accession>P16703</accession>
<proteinExistence type="evidence at protein level"/>
<evidence type="ECO:0000269" key="1">
    <source>
    </source>
</evidence>
<evidence type="ECO:0000305" key="2"/>
<evidence type="ECO:0007829" key="3">
    <source>
        <dbReference type="PDB" id="2BHS"/>
    </source>
</evidence>
<evidence type="ECO:0007829" key="4">
    <source>
        <dbReference type="PDB" id="2V03"/>
    </source>
</evidence>
<dbReference type="EC" id="2.5.1.47"/>
<dbReference type="EMBL" id="M32101">
    <property type="protein sequence ID" value="AAA23640.1"/>
    <property type="molecule type" value="Genomic_DNA"/>
</dbReference>
<dbReference type="EMBL" id="U00096">
    <property type="protein sequence ID" value="AAC75474.1"/>
    <property type="molecule type" value="Genomic_DNA"/>
</dbReference>
<dbReference type="EMBL" id="AP009048">
    <property type="protein sequence ID" value="BAA16295.1"/>
    <property type="molecule type" value="Genomic_DNA"/>
</dbReference>
<dbReference type="PIR" id="D35402">
    <property type="entry name" value="SYECBC"/>
</dbReference>
<dbReference type="RefSeq" id="NP_416916.1">
    <property type="nucleotide sequence ID" value="NC_000913.3"/>
</dbReference>
<dbReference type="RefSeq" id="WP_001336044.1">
    <property type="nucleotide sequence ID" value="NZ_LN832404.1"/>
</dbReference>
<dbReference type="PDB" id="2BHS">
    <property type="method" value="X-ray"/>
    <property type="resolution" value="2.67 A"/>
    <property type="chains" value="A/B/C/D=1-303"/>
</dbReference>
<dbReference type="PDB" id="2BHT">
    <property type="method" value="X-ray"/>
    <property type="resolution" value="2.10 A"/>
    <property type="chains" value="A/B/C/D=1-303"/>
</dbReference>
<dbReference type="PDB" id="2V03">
    <property type="method" value="X-ray"/>
    <property type="resolution" value="1.33 A"/>
    <property type="chains" value="A=1-303"/>
</dbReference>
<dbReference type="PDBsum" id="2BHS"/>
<dbReference type="PDBsum" id="2BHT"/>
<dbReference type="PDBsum" id="2V03"/>
<dbReference type="SMR" id="P16703"/>
<dbReference type="BioGRID" id="4259326">
    <property type="interactions" value="13"/>
</dbReference>
<dbReference type="BioGRID" id="851228">
    <property type="interactions" value="13"/>
</dbReference>
<dbReference type="DIP" id="DIP-9383N"/>
<dbReference type="FunCoup" id="P16703">
    <property type="interactions" value="449"/>
</dbReference>
<dbReference type="IntAct" id="P16703">
    <property type="interactions" value="21"/>
</dbReference>
<dbReference type="STRING" id="511145.b2421"/>
<dbReference type="jPOST" id="P16703"/>
<dbReference type="PaxDb" id="511145-b2421"/>
<dbReference type="EnsemblBacteria" id="AAC75474">
    <property type="protein sequence ID" value="AAC75474"/>
    <property type="gene ID" value="b2421"/>
</dbReference>
<dbReference type="GeneID" id="946888"/>
<dbReference type="KEGG" id="ecj:JW2414"/>
<dbReference type="KEGG" id="eco:b2421"/>
<dbReference type="KEGG" id="ecoc:C3026_13455"/>
<dbReference type="PATRIC" id="fig|1411691.4.peg.4310"/>
<dbReference type="EchoBASE" id="EB0190"/>
<dbReference type="eggNOG" id="COG0031">
    <property type="taxonomic scope" value="Bacteria"/>
</dbReference>
<dbReference type="HOGENOM" id="CLU_021018_1_0_6"/>
<dbReference type="InParanoid" id="P16703"/>
<dbReference type="OMA" id="WMADYGF"/>
<dbReference type="OrthoDB" id="9805733at2"/>
<dbReference type="PhylomeDB" id="P16703"/>
<dbReference type="BioCyc" id="EcoCyc:ACSERLYB-MONOMER"/>
<dbReference type="BioCyc" id="MetaCyc:ACSERLYB-MONOMER"/>
<dbReference type="BRENDA" id="2.5.1.47">
    <property type="organism ID" value="2026"/>
</dbReference>
<dbReference type="SABIO-RK" id="P16703"/>
<dbReference type="UniPathway" id="UPA00136">
    <property type="reaction ID" value="UER00200"/>
</dbReference>
<dbReference type="EvolutionaryTrace" id="P16703"/>
<dbReference type="PRO" id="PR:P16703"/>
<dbReference type="Proteomes" id="UP000000625">
    <property type="component" value="Chromosome"/>
</dbReference>
<dbReference type="GO" id="GO:0005737">
    <property type="term" value="C:cytoplasm"/>
    <property type="evidence" value="ECO:0000318"/>
    <property type="project" value="GO_Central"/>
</dbReference>
<dbReference type="GO" id="GO:0004124">
    <property type="term" value="F:cysteine synthase activity"/>
    <property type="evidence" value="ECO:0000314"/>
    <property type="project" value="EcoCyc"/>
</dbReference>
<dbReference type="GO" id="GO:0080146">
    <property type="term" value="F:L-cysteine desulfhydrase activity"/>
    <property type="evidence" value="ECO:0000315"/>
    <property type="project" value="EcoCyc"/>
</dbReference>
<dbReference type="GO" id="GO:0042803">
    <property type="term" value="F:protein homodimerization activity"/>
    <property type="evidence" value="ECO:0000314"/>
    <property type="project" value="EcoCyc"/>
</dbReference>
<dbReference type="GO" id="GO:0030170">
    <property type="term" value="F:pyridoxal phosphate binding"/>
    <property type="evidence" value="ECO:0000314"/>
    <property type="project" value="EcoCyc"/>
</dbReference>
<dbReference type="GO" id="GO:0019344">
    <property type="term" value="P:cysteine biosynthetic process"/>
    <property type="evidence" value="ECO:0000318"/>
    <property type="project" value="GO_Central"/>
</dbReference>
<dbReference type="GO" id="GO:0006535">
    <property type="term" value="P:cysteine biosynthetic process from serine"/>
    <property type="evidence" value="ECO:0000314"/>
    <property type="project" value="EcoCyc"/>
</dbReference>
<dbReference type="GO" id="GO:0019345">
    <property type="term" value="P:cysteine biosynthetic process via S-sulfo-L-cysteine"/>
    <property type="evidence" value="ECO:0000315"/>
    <property type="project" value="EcoCyc"/>
</dbReference>
<dbReference type="GO" id="GO:0016226">
    <property type="term" value="P:iron-sulfur cluster assembly"/>
    <property type="evidence" value="ECO:0000314"/>
    <property type="project" value="EcoCyc"/>
</dbReference>
<dbReference type="GO" id="GO:0019450">
    <property type="term" value="P:L-cysteine catabolic process to pyruvate"/>
    <property type="evidence" value="ECO:0000315"/>
    <property type="project" value="EcoCyc"/>
</dbReference>
<dbReference type="CDD" id="cd01561">
    <property type="entry name" value="CBS_like"/>
    <property type="match status" value="1"/>
</dbReference>
<dbReference type="FunFam" id="3.40.50.1100:FF:000003">
    <property type="entry name" value="Cystathionine beta-synthase"/>
    <property type="match status" value="1"/>
</dbReference>
<dbReference type="FunFam" id="3.40.50.1100:FF:000029">
    <property type="entry name" value="Cysteine synthase"/>
    <property type="match status" value="1"/>
</dbReference>
<dbReference type="Gene3D" id="3.40.50.1100">
    <property type="match status" value="2"/>
</dbReference>
<dbReference type="InterPro" id="IPR005856">
    <property type="entry name" value="Cys_synth"/>
</dbReference>
<dbReference type="InterPro" id="IPR050214">
    <property type="entry name" value="Cys_Synth/Cystath_Beta-Synth"/>
</dbReference>
<dbReference type="InterPro" id="IPR005858">
    <property type="entry name" value="CysM"/>
</dbReference>
<dbReference type="InterPro" id="IPR001216">
    <property type="entry name" value="P-phosphate_BS"/>
</dbReference>
<dbReference type="InterPro" id="IPR001926">
    <property type="entry name" value="TrpB-like_PALP"/>
</dbReference>
<dbReference type="InterPro" id="IPR036052">
    <property type="entry name" value="TrpB-like_PALP_sf"/>
</dbReference>
<dbReference type="NCBIfam" id="TIGR01136">
    <property type="entry name" value="cysKM"/>
    <property type="match status" value="1"/>
</dbReference>
<dbReference type="NCBIfam" id="TIGR01138">
    <property type="entry name" value="cysM"/>
    <property type="match status" value="1"/>
</dbReference>
<dbReference type="NCBIfam" id="NF008735">
    <property type="entry name" value="PRK11761.1"/>
    <property type="match status" value="1"/>
</dbReference>
<dbReference type="PANTHER" id="PTHR10314">
    <property type="entry name" value="CYSTATHIONINE BETA-SYNTHASE"/>
    <property type="match status" value="1"/>
</dbReference>
<dbReference type="Pfam" id="PF00291">
    <property type="entry name" value="PALP"/>
    <property type="match status" value="1"/>
</dbReference>
<dbReference type="SUPFAM" id="SSF53686">
    <property type="entry name" value="Tryptophan synthase beta subunit-like PLP-dependent enzymes"/>
    <property type="match status" value="1"/>
</dbReference>
<dbReference type="PROSITE" id="PS00901">
    <property type="entry name" value="CYS_SYNTHASE"/>
    <property type="match status" value="1"/>
</dbReference>
<organism>
    <name type="scientific">Escherichia coli (strain K12)</name>
    <dbReference type="NCBI Taxonomy" id="83333"/>
    <lineage>
        <taxon>Bacteria</taxon>
        <taxon>Pseudomonadati</taxon>
        <taxon>Pseudomonadota</taxon>
        <taxon>Gammaproteobacteria</taxon>
        <taxon>Enterobacterales</taxon>
        <taxon>Enterobacteriaceae</taxon>
        <taxon>Escherichia</taxon>
    </lineage>
</organism>
<gene>
    <name type="primary">cysM</name>
    <name type="ordered locus">b2421</name>
    <name type="ordered locus">JW2414</name>
</gene>
<keyword id="KW-0002">3D-structure</keyword>
<keyword id="KW-0028">Amino-acid biosynthesis</keyword>
<keyword id="KW-0198">Cysteine biosynthesis</keyword>
<keyword id="KW-0663">Pyridoxal phosphate</keyword>
<keyword id="KW-1185">Reference proteome</keyword>
<keyword id="KW-0808">Transferase</keyword>
<protein>
    <recommendedName>
        <fullName>Cysteine synthase B</fullName>
        <shortName>CSase B</shortName>
        <ecNumber>2.5.1.47</ecNumber>
    </recommendedName>
    <alternativeName>
        <fullName>O-acetylserine (thiol)-lyase B</fullName>
        <shortName>OAS-TL B</shortName>
    </alternativeName>
    <alternativeName>
        <fullName>O-acetylserine sulfhydrylase B</fullName>
    </alternativeName>
</protein>
<name>CYSM_ECOLI</name>
<reference key="1">
    <citation type="journal article" date="1990" name="J. Bacteriol.">
        <title>Sulfate and thiosulfate transport in Escherichia coli K-12: nucleotide sequence and expression of the cysTWAM gene cluster.</title>
        <authorList>
            <person name="Sirko A."/>
            <person name="Hryniewicz M.M."/>
            <person name="Hulanicka D.M."/>
            <person name="Boeck A."/>
        </authorList>
    </citation>
    <scope>NUCLEOTIDE SEQUENCE [GENOMIC DNA]</scope>
    <source>
        <strain>K12</strain>
    </source>
</reference>
<reference key="2">
    <citation type="journal article" date="1997" name="DNA Res.">
        <title>Construction of a contiguous 874-kb sequence of the Escherichia coli-K12 genome corresponding to 50.0-68.8 min on the linkage map and analysis of its sequence features.</title>
        <authorList>
            <person name="Yamamoto Y."/>
            <person name="Aiba H."/>
            <person name="Baba T."/>
            <person name="Hayashi K."/>
            <person name="Inada T."/>
            <person name="Isono K."/>
            <person name="Itoh T."/>
            <person name="Kimura S."/>
            <person name="Kitagawa M."/>
            <person name="Makino K."/>
            <person name="Miki T."/>
            <person name="Mitsuhashi N."/>
            <person name="Mizobuchi K."/>
            <person name="Mori H."/>
            <person name="Nakade S."/>
            <person name="Nakamura Y."/>
            <person name="Nashimoto H."/>
            <person name="Oshima T."/>
            <person name="Oyama S."/>
            <person name="Saito N."/>
            <person name="Sampei G."/>
            <person name="Satoh Y."/>
            <person name="Sivasundaram S."/>
            <person name="Tagami H."/>
            <person name="Takahashi H."/>
            <person name="Takeda J."/>
            <person name="Takemoto K."/>
            <person name="Uehara K."/>
            <person name="Wada C."/>
            <person name="Yamagata S."/>
            <person name="Horiuchi T."/>
        </authorList>
    </citation>
    <scope>NUCLEOTIDE SEQUENCE [LARGE SCALE GENOMIC DNA]</scope>
    <source>
        <strain>K12 / W3110 / ATCC 27325 / DSM 5911</strain>
    </source>
</reference>
<reference key="3">
    <citation type="journal article" date="1997" name="Science">
        <title>The complete genome sequence of Escherichia coli K-12.</title>
        <authorList>
            <person name="Blattner F.R."/>
            <person name="Plunkett G. III"/>
            <person name="Bloch C.A."/>
            <person name="Perna N.T."/>
            <person name="Burland V."/>
            <person name="Riley M."/>
            <person name="Collado-Vides J."/>
            <person name="Glasner J.D."/>
            <person name="Rode C.K."/>
            <person name="Mayhew G.F."/>
            <person name="Gregor J."/>
            <person name="Davis N.W."/>
            <person name="Kirkpatrick H.A."/>
            <person name="Goeden M.A."/>
            <person name="Rose D.J."/>
            <person name="Mau B."/>
            <person name="Shao Y."/>
        </authorList>
    </citation>
    <scope>NUCLEOTIDE SEQUENCE [LARGE SCALE GENOMIC DNA]</scope>
    <source>
        <strain>K12 / MG1655 / ATCC 47076</strain>
    </source>
</reference>
<reference key="4">
    <citation type="journal article" date="2006" name="Mol. Syst. Biol.">
        <title>Highly accurate genome sequences of Escherichia coli K-12 strains MG1655 and W3110.</title>
        <authorList>
            <person name="Hayashi K."/>
            <person name="Morooka N."/>
            <person name="Yamamoto Y."/>
            <person name="Fujita K."/>
            <person name="Isono K."/>
            <person name="Choi S."/>
            <person name="Ohtsubo E."/>
            <person name="Baba T."/>
            <person name="Wanner B.L."/>
            <person name="Mori H."/>
            <person name="Horiuchi T."/>
        </authorList>
    </citation>
    <scope>NUCLEOTIDE SEQUENCE [LARGE SCALE GENOMIC DNA]</scope>
    <source>
        <strain>K12 / W3110 / ATCC 27325 / DSM 5911</strain>
    </source>
</reference>
<reference key="5">
    <citation type="journal article" date="2005" name="Biochemistry">
        <title>Structure of the O-acetylserine sulfhydrylase isoenzyme CysM from Escherichia coli.</title>
        <authorList>
            <person name="Claus M.T."/>
            <person name="Zocher G.E."/>
            <person name="Maier T.H.P."/>
            <person name="Schulz G.E."/>
        </authorList>
    </citation>
    <scope>X-RAY CRYSTALLOGRAPHY (2.1 ANGSTROMS) OF WILD-TYPE AND MUTANT CYSM-RKE IN COMPLEX WITH PYRIDOXAL PHOSPHATE</scope>
    <scope>SUBUNIT</scope>
</reference>
<sequence length="303" mass="32664">MSTLEQTIGNTPLVKLQRMGPDNGSEVWLKLEGNNPAGSVKDRAALSMIVEAEKRGEIKPGDVLIEATSGNTGIALAMIAALKGYRMKLLMPDNMSQERRAAMRAYGAELILVTKEQGMEGARDLALEMANRGEGKLLDQFNNPDNPYAHYTTTGPEIWQQTGGRITHFVSSMGTTGTITGVSRFMREQSKPVTIVGLQPEEGSSIPGIRRWPTEYLPGIFNASLVDEVLDIHQRDAENTMRELAVREGIFCGVSSGGAVAGALRVAKANPDAVVVAIICDRGDRYLSTGVFGEEHFSQGAGI</sequence>
<comment type="function">
    <text>Two cysteine synthase enzymes are found. Both catalyze the same reaction. Cysteine synthase B can also use thiosulfate in place of sulfide to give cysteine thiosulfonate as a product.</text>
</comment>
<comment type="catalytic activity">
    <reaction>
        <text>O-acetyl-L-serine + hydrogen sulfide = L-cysteine + acetate</text>
        <dbReference type="Rhea" id="RHEA:14829"/>
        <dbReference type="ChEBI" id="CHEBI:29919"/>
        <dbReference type="ChEBI" id="CHEBI:30089"/>
        <dbReference type="ChEBI" id="CHEBI:35235"/>
        <dbReference type="ChEBI" id="CHEBI:58340"/>
        <dbReference type="EC" id="2.5.1.47"/>
    </reaction>
</comment>
<comment type="cofactor">
    <cofactor>
        <name>pyridoxal 5'-phosphate</name>
        <dbReference type="ChEBI" id="CHEBI:597326"/>
    </cofactor>
</comment>
<comment type="pathway">
    <text>Amino-acid biosynthesis; L-cysteine biosynthesis; L-cysteine from L-serine: step 2/2.</text>
</comment>
<comment type="subunit">
    <text evidence="1">Homodimer.</text>
</comment>
<comment type="interaction">
    <interactant intactId="EBI-542376">
        <id>P16703</id>
    </interactant>
    <interactant intactId="EBI-542308">
        <id>P24182</id>
        <label>accC</label>
    </interactant>
    <organismsDiffer>false</organismsDiffer>
    <experiments>3</experiments>
</comment>
<comment type="similarity">
    <text evidence="2">Belongs to the cysteine synthase/cystathionine beta-synthase family.</text>
</comment>